<evidence type="ECO:0000255" key="1">
    <source>
        <dbReference type="HAMAP-Rule" id="MF_01364"/>
    </source>
</evidence>
<evidence type="ECO:0000305" key="2"/>
<dbReference type="EMBL" id="AE009948">
    <property type="protein sequence ID" value="AAM98979.1"/>
    <property type="molecule type" value="Genomic_DNA"/>
</dbReference>
<dbReference type="RefSeq" id="NP_687107.1">
    <property type="nucleotide sequence ID" value="NC_004116.1"/>
</dbReference>
<dbReference type="RefSeq" id="WP_001085698.1">
    <property type="nucleotide sequence ID" value="NC_004116.1"/>
</dbReference>
<dbReference type="SMR" id="Q8E2C1"/>
<dbReference type="STRING" id="208435.SAG0071"/>
<dbReference type="KEGG" id="sag:SAG0071"/>
<dbReference type="PATRIC" id="fig|208435.3.peg.70"/>
<dbReference type="HOGENOM" id="CLU_139869_3_0_9"/>
<dbReference type="OrthoDB" id="9810484at2"/>
<dbReference type="Proteomes" id="UP000000821">
    <property type="component" value="Chromosome"/>
</dbReference>
<dbReference type="GO" id="GO:0015935">
    <property type="term" value="C:small ribosomal subunit"/>
    <property type="evidence" value="ECO:0007669"/>
    <property type="project" value="TreeGrafter"/>
</dbReference>
<dbReference type="GO" id="GO:0019843">
    <property type="term" value="F:rRNA binding"/>
    <property type="evidence" value="ECO:0007669"/>
    <property type="project" value="UniProtKB-UniRule"/>
</dbReference>
<dbReference type="GO" id="GO:0003735">
    <property type="term" value="F:structural constituent of ribosome"/>
    <property type="evidence" value="ECO:0007669"/>
    <property type="project" value="InterPro"/>
</dbReference>
<dbReference type="GO" id="GO:0008270">
    <property type="term" value="F:zinc ion binding"/>
    <property type="evidence" value="ECO:0007669"/>
    <property type="project" value="UniProtKB-UniRule"/>
</dbReference>
<dbReference type="GO" id="GO:0006412">
    <property type="term" value="P:translation"/>
    <property type="evidence" value="ECO:0007669"/>
    <property type="project" value="UniProtKB-UniRule"/>
</dbReference>
<dbReference type="FunFam" id="4.10.830.10:FF:000001">
    <property type="entry name" value="30S ribosomal protein S14 type Z"/>
    <property type="match status" value="1"/>
</dbReference>
<dbReference type="Gene3D" id="4.10.830.10">
    <property type="entry name" value="30s Ribosomal Protein S14, Chain N"/>
    <property type="match status" value="1"/>
</dbReference>
<dbReference type="HAMAP" id="MF_01364_B">
    <property type="entry name" value="Ribosomal_uS14_2_B"/>
    <property type="match status" value="1"/>
</dbReference>
<dbReference type="InterPro" id="IPR001209">
    <property type="entry name" value="Ribosomal_uS14"/>
</dbReference>
<dbReference type="InterPro" id="IPR023053">
    <property type="entry name" value="Ribosomal_uS14_bact"/>
</dbReference>
<dbReference type="InterPro" id="IPR018271">
    <property type="entry name" value="Ribosomal_uS14_CS"/>
</dbReference>
<dbReference type="InterPro" id="IPR043140">
    <property type="entry name" value="Ribosomal_uS14_sf"/>
</dbReference>
<dbReference type="NCBIfam" id="NF005974">
    <property type="entry name" value="PRK08061.1"/>
    <property type="match status" value="1"/>
</dbReference>
<dbReference type="PANTHER" id="PTHR19836">
    <property type="entry name" value="30S RIBOSOMAL PROTEIN S14"/>
    <property type="match status" value="1"/>
</dbReference>
<dbReference type="PANTHER" id="PTHR19836:SF26">
    <property type="entry name" value="SMALL RIBOSOMAL SUBUNIT PROTEIN US14B"/>
    <property type="match status" value="1"/>
</dbReference>
<dbReference type="Pfam" id="PF00253">
    <property type="entry name" value="Ribosomal_S14"/>
    <property type="match status" value="1"/>
</dbReference>
<dbReference type="SUPFAM" id="SSF57716">
    <property type="entry name" value="Glucocorticoid receptor-like (DNA-binding domain)"/>
    <property type="match status" value="1"/>
</dbReference>
<dbReference type="PROSITE" id="PS00527">
    <property type="entry name" value="RIBOSOMAL_S14"/>
    <property type="match status" value="1"/>
</dbReference>
<organism>
    <name type="scientific">Streptococcus agalactiae serotype V (strain ATCC BAA-611 / 2603 V/R)</name>
    <dbReference type="NCBI Taxonomy" id="208435"/>
    <lineage>
        <taxon>Bacteria</taxon>
        <taxon>Bacillati</taxon>
        <taxon>Bacillota</taxon>
        <taxon>Bacilli</taxon>
        <taxon>Lactobacillales</taxon>
        <taxon>Streptococcaceae</taxon>
        <taxon>Streptococcus</taxon>
    </lineage>
</organism>
<sequence>MAKKSMIAKNKRPAKFSTQAYTRCEKCGRPHSVYRKFQLCRVCFRDLAYKGQVPGVTKASW</sequence>
<feature type="chain" id="PRO_0000269143" description="Small ribosomal subunit protein uS14B">
    <location>
        <begin position="1"/>
        <end position="61"/>
    </location>
</feature>
<feature type="binding site" evidence="1">
    <location>
        <position position="24"/>
    </location>
    <ligand>
        <name>Zn(2+)</name>
        <dbReference type="ChEBI" id="CHEBI:29105"/>
    </ligand>
</feature>
<feature type="binding site" evidence="1">
    <location>
        <position position="27"/>
    </location>
    <ligand>
        <name>Zn(2+)</name>
        <dbReference type="ChEBI" id="CHEBI:29105"/>
    </ligand>
</feature>
<feature type="binding site" evidence="1">
    <location>
        <position position="40"/>
    </location>
    <ligand>
        <name>Zn(2+)</name>
        <dbReference type="ChEBI" id="CHEBI:29105"/>
    </ligand>
</feature>
<feature type="binding site" evidence="1">
    <location>
        <position position="43"/>
    </location>
    <ligand>
        <name>Zn(2+)</name>
        <dbReference type="ChEBI" id="CHEBI:29105"/>
    </ligand>
</feature>
<proteinExistence type="inferred from homology"/>
<name>RS14Z_STRA5</name>
<accession>Q8E2C1</accession>
<comment type="function">
    <text evidence="1">Binds 16S rRNA, required for the assembly of 30S particles and may also be responsible for determining the conformation of the 16S rRNA at the A site.</text>
</comment>
<comment type="cofactor">
    <cofactor evidence="1">
        <name>Zn(2+)</name>
        <dbReference type="ChEBI" id="CHEBI:29105"/>
    </cofactor>
    <text evidence="1">Binds 1 zinc ion per subunit.</text>
</comment>
<comment type="subunit">
    <text evidence="1">Part of the 30S ribosomal subunit. Contacts proteins S3 and S10.</text>
</comment>
<comment type="similarity">
    <text evidence="1">Belongs to the universal ribosomal protein uS14 family. Zinc-binding uS14 subfamily.</text>
</comment>
<protein>
    <recommendedName>
        <fullName evidence="1">Small ribosomal subunit protein uS14B</fullName>
    </recommendedName>
    <alternativeName>
        <fullName evidence="2">30S ribosomal protein S14 type Z</fullName>
    </alternativeName>
</protein>
<keyword id="KW-0479">Metal-binding</keyword>
<keyword id="KW-1185">Reference proteome</keyword>
<keyword id="KW-0687">Ribonucleoprotein</keyword>
<keyword id="KW-0689">Ribosomal protein</keyword>
<keyword id="KW-0694">RNA-binding</keyword>
<keyword id="KW-0699">rRNA-binding</keyword>
<keyword id="KW-0862">Zinc</keyword>
<reference key="1">
    <citation type="journal article" date="2002" name="Proc. Natl. Acad. Sci. U.S.A.">
        <title>Complete genome sequence and comparative genomic analysis of an emerging human pathogen, serotype V Streptococcus agalactiae.</title>
        <authorList>
            <person name="Tettelin H."/>
            <person name="Masignani V."/>
            <person name="Cieslewicz M.J."/>
            <person name="Eisen J.A."/>
            <person name="Peterson S.N."/>
            <person name="Wessels M.R."/>
            <person name="Paulsen I.T."/>
            <person name="Nelson K.E."/>
            <person name="Margarit I."/>
            <person name="Read T.D."/>
            <person name="Madoff L.C."/>
            <person name="Wolf A.M."/>
            <person name="Beanan M.J."/>
            <person name="Brinkac L.M."/>
            <person name="Daugherty S.C."/>
            <person name="DeBoy R.T."/>
            <person name="Durkin A.S."/>
            <person name="Kolonay J.F."/>
            <person name="Madupu R."/>
            <person name="Lewis M.R."/>
            <person name="Radune D."/>
            <person name="Fedorova N.B."/>
            <person name="Scanlan D."/>
            <person name="Khouri H.M."/>
            <person name="Mulligan S."/>
            <person name="Carty H.A."/>
            <person name="Cline R.T."/>
            <person name="Van Aken S.E."/>
            <person name="Gill J."/>
            <person name="Scarselli M."/>
            <person name="Mora M."/>
            <person name="Iacobini E.T."/>
            <person name="Brettoni C."/>
            <person name="Galli G."/>
            <person name="Mariani M."/>
            <person name="Vegni F."/>
            <person name="Maione D."/>
            <person name="Rinaudo D."/>
            <person name="Rappuoli R."/>
            <person name="Telford J.L."/>
            <person name="Kasper D.L."/>
            <person name="Grandi G."/>
            <person name="Fraser C.M."/>
        </authorList>
    </citation>
    <scope>NUCLEOTIDE SEQUENCE [LARGE SCALE GENOMIC DNA]</scope>
    <source>
        <strain>ATCC BAA-611 / 2603 V/R</strain>
    </source>
</reference>
<gene>
    <name evidence="1" type="primary">rpsZ</name>
    <name evidence="1" type="synonym">rpsN1</name>
    <name type="ordered locus">SAG0071</name>
</gene>